<dbReference type="EC" id="3.4.11.18" evidence="1"/>
<dbReference type="EMBL" id="BX571856">
    <property type="protein sequence ID" value="CAG40965.1"/>
    <property type="molecule type" value="Genomic_DNA"/>
</dbReference>
<dbReference type="RefSeq" id="WP_000636142.1">
    <property type="nucleotide sequence ID" value="NC_002952.2"/>
</dbReference>
<dbReference type="SMR" id="Q6GFG9"/>
<dbReference type="MEROPS" id="M24.036"/>
<dbReference type="KEGG" id="sar:SAR1978"/>
<dbReference type="HOGENOM" id="CLU_015857_0_2_9"/>
<dbReference type="Proteomes" id="UP000000596">
    <property type="component" value="Chromosome"/>
</dbReference>
<dbReference type="GO" id="GO:0004239">
    <property type="term" value="F:initiator methionyl aminopeptidase activity"/>
    <property type="evidence" value="ECO:0007669"/>
    <property type="project" value="UniProtKB-UniRule"/>
</dbReference>
<dbReference type="GO" id="GO:0046872">
    <property type="term" value="F:metal ion binding"/>
    <property type="evidence" value="ECO:0007669"/>
    <property type="project" value="UniProtKB-UniRule"/>
</dbReference>
<dbReference type="GO" id="GO:0070006">
    <property type="term" value="F:metalloaminopeptidase activity"/>
    <property type="evidence" value="ECO:0007669"/>
    <property type="project" value="UniProtKB-UniRule"/>
</dbReference>
<dbReference type="GO" id="GO:0006508">
    <property type="term" value="P:proteolysis"/>
    <property type="evidence" value="ECO:0007669"/>
    <property type="project" value="UniProtKB-KW"/>
</dbReference>
<dbReference type="CDD" id="cd01086">
    <property type="entry name" value="MetAP1"/>
    <property type="match status" value="1"/>
</dbReference>
<dbReference type="Gene3D" id="3.90.230.10">
    <property type="entry name" value="Creatinase/methionine aminopeptidase superfamily"/>
    <property type="match status" value="1"/>
</dbReference>
<dbReference type="HAMAP" id="MF_01974">
    <property type="entry name" value="MetAP_1"/>
    <property type="match status" value="1"/>
</dbReference>
<dbReference type="InterPro" id="IPR036005">
    <property type="entry name" value="Creatinase/aminopeptidase-like"/>
</dbReference>
<dbReference type="InterPro" id="IPR000994">
    <property type="entry name" value="Pept_M24"/>
</dbReference>
<dbReference type="InterPro" id="IPR001714">
    <property type="entry name" value="Pept_M24_MAP"/>
</dbReference>
<dbReference type="InterPro" id="IPR002467">
    <property type="entry name" value="Pept_M24A_MAP1"/>
</dbReference>
<dbReference type="NCBIfam" id="TIGR00500">
    <property type="entry name" value="met_pdase_I"/>
    <property type="match status" value="1"/>
</dbReference>
<dbReference type="PANTHER" id="PTHR43330">
    <property type="entry name" value="METHIONINE AMINOPEPTIDASE"/>
    <property type="match status" value="1"/>
</dbReference>
<dbReference type="PANTHER" id="PTHR43330:SF13">
    <property type="entry name" value="METHIONINE AMINOPEPTIDASE 2"/>
    <property type="match status" value="1"/>
</dbReference>
<dbReference type="Pfam" id="PF00557">
    <property type="entry name" value="Peptidase_M24"/>
    <property type="match status" value="1"/>
</dbReference>
<dbReference type="PRINTS" id="PR00599">
    <property type="entry name" value="MAPEPTIDASE"/>
</dbReference>
<dbReference type="SUPFAM" id="SSF55920">
    <property type="entry name" value="Creatinase/aminopeptidase"/>
    <property type="match status" value="1"/>
</dbReference>
<gene>
    <name evidence="1" type="primary">map</name>
    <name type="ordered locus">SAR1978</name>
</gene>
<organism>
    <name type="scientific">Staphylococcus aureus (strain MRSA252)</name>
    <dbReference type="NCBI Taxonomy" id="282458"/>
    <lineage>
        <taxon>Bacteria</taxon>
        <taxon>Bacillati</taxon>
        <taxon>Bacillota</taxon>
        <taxon>Bacilli</taxon>
        <taxon>Bacillales</taxon>
        <taxon>Staphylococcaceae</taxon>
        <taxon>Staphylococcus</taxon>
    </lineage>
</organism>
<keyword id="KW-0031">Aminopeptidase</keyword>
<keyword id="KW-0378">Hydrolase</keyword>
<keyword id="KW-0479">Metal-binding</keyword>
<keyword id="KW-0645">Protease</keyword>
<sequence>MIVKTEEELQALKEIGYICAKVRNTMQAATKPGITTKELDNIAKELFEEYGAISAPIHDENFPGQTCISVNEEVAHGIPSKRVIREGDLVNIDVSALKNGYYADTGISFVVGESDDPMKQKVCDVATMAFENAIAKVKPGTKLSNIGKAVHNTARQNDLKVIKNLTGHGVGLSLHEAPAHVLNYFDPKDKTLLTEGMVLAIEPFISSNASFVTEGKNEWAFETSDKSFVAQIEHTVIVTKDGPILTTKIEEE</sequence>
<comment type="function">
    <text evidence="1">Removes the N-terminal methionine from nascent proteins. The N-terminal methionine is often cleaved when the second residue in the primary sequence is small and uncharged (Met-Ala-, Cys, Gly, Pro, Ser, Thr, or Val). Requires deformylation of the N(alpha)-formylated initiator methionine before it can be hydrolyzed.</text>
</comment>
<comment type="catalytic activity">
    <reaction evidence="1">
        <text>Release of N-terminal amino acids, preferentially methionine, from peptides and arylamides.</text>
        <dbReference type="EC" id="3.4.11.18"/>
    </reaction>
</comment>
<comment type="cofactor">
    <cofactor evidence="1">
        <name>Co(2+)</name>
        <dbReference type="ChEBI" id="CHEBI:48828"/>
    </cofactor>
    <cofactor evidence="1">
        <name>Zn(2+)</name>
        <dbReference type="ChEBI" id="CHEBI:29105"/>
    </cofactor>
    <cofactor evidence="1">
        <name>Mn(2+)</name>
        <dbReference type="ChEBI" id="CHEBI:29035"/>
    </cofactor>
    <cofactor evidence="1">
        <name>Fe(2+)</name>
        <dbReference type="ChEBI" id="CHEBI:29033"/>
    </cofactor>
    <text evidence="1">Binds 2 divalent metal cations per subunit. Has a high-affinity and a low affinity metal-binding site. The true nature of the physiological cofactor is under debate. The enzyme is active with cobalt, zinc, manganese or divalent iron ions. Most likely, methionine aminopeptidases function as mononuclear Fe(2+)-metalloproteases under physiological conditions, and the catalytically relevant metal-binding site has been assigned to the histidine-containing high-affinity site.</text>
</comment>
<comment type="subunit">
    <text evidence="1">Monomer.</text>
</comment>
<comment type="similarity">
    <text evidence="1">Belongs to the peptidase M24A family. Methionine aminopeptidase type 1 subfamily.</text>
</comment>
<feature type="chain" id="PRO_0000148957" description="Methionine aminopeptidase">
    <location>
        <begin position="1"/>
        <end position="252"/>
    </location>
</feature>
<feature type="binding site" evidence="1">
    <location>
        <position position="76"/>
    </location>
    <ligand>
        <name>substrate</name>
    </ligand>
</feature>
<feature type="binding site" evidence="1">
    <location>
        <position position="93"/>
    </location>
    <ligand>
        <name>a divalent metal cation</name>
        <dbReference type="ChEBI" id="CHEBI:60240"/>
        <label>1</label>
    </ligand>
</feature>
<feature type="binding site" evidence="1">
    <location>
        <position position="104"/>
    </location>
    <ligand>
        <name>a divalent metal cation</name>
        <dbReference type="ChEBI" id="CHEBI:60240"/>
        <label>1</label>
    </ligand>
</feature>
<feature type="binding site" evidence="1">
    <location>
        <position position="104"/>
    </location>
    <ligand>
        <name>a divalent metal cation</name>
        <dbReference type="ChEBI" id="CHEBI:60240"/>
        <label>2</label>
        <note>catalytic</note>
    </ligand>
</feature>
<feature type="binding site" evidence="1">
    <location>
        <position position="168"/>
    </location>
    <ligand>
        <name>a divalent metal cation</name>
        <dbReference type="ChEBI" id="CHEBI:60240"/>
        <label>2</label>
        <note>catalytic</note>
    </ligand>
</feature>
<feature type="binding site" evidence="1">
    <location>
        <position position="175"/>
    </location>
    <ligand>
        <name>substrate</name>
    </ligand>
</feature>
<feature type="binding site" evidence="1">
    <location>
        <position position="202"/>
    </location>
    <ligand>
        <name>a divalent metal cation</name>
        <dbReference type="ChEBI" id="CHEBI:60240"/>
        <label>2</label>
        <note>catalytic</note>
    </ligand>
</feature>
<feature type="binding site" evidence="1">
    <location>
        <position position="233"/>
    </location>
    <ligand>
        <name>a divalent metal cation</name>
        <dbReference type="ChEBI" id="CHEBI:60240"/>
        <label>1</label>
    </ligand>
</feature>
<feature type="binding site" evidence="1">
    <location>
        <position position="233"/>
    </location>
    <ligand>
        <name>a divalent metal cation</name>
        <dbReference type="ChEBI" id="CHEBI:60240"/>
        <label>2</label>
        <note>catalytic</note>
    </ligand>
</feature>
<name>MAP1_STAAR</name>
<protein>
    <recommendedName>
        <fullName evidence="1">Methionine aminopeptidase</fullName>
        <shortName evidence="1">MAP</shortName>
        <shortName evidence="1">MetAP</shortName>
        <ecNumber evidence="1">3.4.11.18</ecNumber>
    </recommendedName>
    <alternativeName>
        <fullName evidence="1">Peptidase M</fullName>
    </alternativeName>
</protein>
<accession>Q6GFG9</accession>
<proteinExistence type="inferred from homology"/>
<evidence type="ECO:0000255" key="1">
    <source>
        <dbReference type="HAMAP-Rule" id="MF_01974"/>
    </source>
</evidence>
<reference key="1">
    <citation type="journal article" date="2004" name="Proc. Natl. Acad. Sci. U.S.A.">
        <title>Complete genomes of two clinical Staphylococcus aureus strains: evidence for the rapid evolution of virulence and drug resistance.</title>
        <authorList>
            <person name="Holden M.T.G."/>
            <person name="Feil E.J."/>
            <person name="Lindsay J.A."/>
            <person name="Peacock S.J."/>
            <person name="Day N.P.J."/>
            <person name="Enright M.C."/>
            <person name="Foster T.J."/>
            <person name="Moore C.E."/>
            <person name="Hurst L."/>
            <person name="Atkin R."/>
            <person name="Barron A."/>
            <person name="Bason N."/>
            <person name="Bentley S.D."/>
            <person name="Chillingworth C."/>
            <person name="Chillingworth T."/>
            <person name="Churcher C."/>
            <person name="Clark L."/>
            <person name="Corton C."/>
            <person name="Cronin A."/>
            <person name="Doggett J."/>
            <person name="Dowd L."/>
            <person name="Feltwell T."/>
            <person name="Hance Z."/>
            <person name="Harris B."/>
            <person name="Hauser H."/>
            <person name="Holroyd S."/>
            <person name="Jagels K."/>
            <person name="James K.D."/>
            <person name="Lennard N."/>
            <person name="Line A."/>
            <person name="Mayes R."/>
            <person name="Moule S."/>
            <person name="Mungall K."/>
            <person name="Ormond D."/>
            <person name="Quail M.A."/>
            <person name="Rabbinowitsch E."/>
            <person name="Rutherford K.M."/>
            <person name="Sanders M."/>
            <person name="Sharp S."/>
            <person name="Simmonds M."/>
            <person name="Stevens K."/>
            <person name="Whitehead S."/>
            <person name="Barrell B.G."/>
            <person name="Spratt B.G."/>
            <person name="Parkhill J."/>
        </authorList>
    </citation>
    <scope>NUCLEOTIDE SEQUENCE [LARGE SCALE GENOMIC DNA]</scope>
    <source>
        <strain>MRSA252</strain>
    </source>
</reference>